<feature type="chain" id="PRO_0000385768" description="GTPase Obg">
    <location>
        <begin position="1"/>
        <end position="341"/>
    </location>
</feature>
<feature type="domain" description="Obg" evidence="2">
    <location>
        <begin position="1"/>
        <end position="159"/>
    </location>
</feature>
<feature type="domain" description="OBG-type G" evidence="1">
    <location>
        <begin position="160"/>
        <end position="327"/>
    </location>
</feature>
<feature type="binding site" evidence="1">
    <location>
        <begin position="166"/>
        <end position="173"/>
    </location>
    <ligand>
        <name>GTP</name>
        <dbReference type="ChEBI" id="CHEBI:37565"/>
    </ligand>
</feature>
<feature type="binding site" evidence="1">
    <location>
        <position position="173"/>
    </location>
    <ligand>
        <name>Mg(2+)</name>
        <dbReference type="ChEBI" id="CHEBI:18420"/>
    </ligand>
</feature>
<feature type="binding site" evidence="1">
    <location>
        <begin position="191"/>
        <end position="195"/>
    </location>
    <ligand>
        <name>GTP</name>
        <dbReference type="ChEBI" id="CHEBI:37565"/>
    </ligand>
</feature>
<feature type="binding site" evidence="1">
    <location>
        <position position="193"/>
    </location>
    <ligand>
        <name>Mg(2+)</name>
        <dbReference type="ChEBI" id="CHEBI:18420"/>
    </ligand>
</feature>
<feature type="binding site" evidence="1">
    <location>
        <begin position="212"/>
        <end position="215"/>
    </location>
    <ligand>
        <name>GTP</name>
        <dbReference type="ChEBI" id="CHEBI:37565"/>
    </ligand>
</feature>
<feature type="binding site" evidence="1">
    <location>
        <begin position="279"/>
        <end position="282"/>
    </location>
    <ligand>
        <name>GTP</name>
        <dbReference type="ChEBI" id="CHEBI:37565"/>
    </ligand>
</feature>
<feature type="binding site" evidence="1">
    <location>
        <begin position="308"/>
        <end position="310"/>
    </location>
    <ligand>
        <name>GTP</name>
        <dbReference type="ChEBI" id="CHEBI:37565"/>
    </ligand>
</feature>
<comment type="function">
    <text evidence="1">An essential GTPase which binds GTP, GDP and possibly (p)ppGpp with moderate affinity, with high nucleotide exchange rates and a fairly low GTP hydrolysis rate. Plays a role in control of the cell cycle, stress response, ribosome biogenesis and in those bacteria that undergo differentiation, in morphogenesis control.</text>
</comment>
<comment type="cofactor">
    <cofactor evidence="1">
        <name>Mg(2+)</name>
        <dbReference type="ChEBI" id="CHEBI:18420"/>
    </cofactor>
</comment>
<comment type="subunit">
    <text evidence="1">Monomer.</text>
</comment>
<comment type="subcellular location">
    <subcellularLocation>
        <location evidence="1">Cytoplasm</location>
    </subcellularLocation>
</comment>
<comment type="similarity">
    <text evidence="1">Belongs to the TRAFAC class OBG-HflX-like GTPase superfamily. OBG GTPase family.</text>
</comment>
<dbReference type="EC" id="3.6.5.-" evidence="1"/>
<dbReference type="EMBL" id="CP000872">
    <property type="protein sequence ID" value="ABX62880.1"/>
    <property type="molecule type" value="Genomic_DNA"/>
</dbReference>
<dbReference type="SMR" id="A9M882"/>
<dbReference type="KEGG" id="bcs:BCAN_A1883"/>
<dbReference type="HOGENOM" id="CLU_011747_2_0_5"/>
<dbReference type="PhylomeDB" id="A9M882"/>
<dbReference type="Proteomes" id="UP000001385">
    <property type="component" value="Chromosome I"/>
</dbReference>
<dbReference type="GO" id="GO:0005737">
    <property type="term" value="C:cytoplasm"/>
    <property type="evidence" value="ECO:0007669"/>
    <property type="project" value="UniProtKB-SubCell"/>
</dbReference>
<dbReference type="GO" id="GO:0005525">
    <property type="term" value="F:GTP binding"/>
    <property type="evidence" value="ECO:0007669"/>
    <property type="project" value="UniProtKB-UniRule"/>
</dbReference>
<dbReference type="GO" id="GO:0003924">
    <property type="term" value="F:GTPase activity"/>
    <property type="evidence" value="ECO:0007669"/>
    <property type="project" value="UniProtKB-UniRule"/>
</dbReference>
<dbReference type="GO" id="GO:0000287">
    <property type="term" value="F:magnesium ion binding"/>
    <property type="evidence" value="ECO:0007669"/>
    <property type="project" value="InterPro"/>
</dbReference>
<dbReference type="GO" id="GO:0042254">
    <property type="term" value="P:ribosome biogenesis"/>
    <property type="evidence" value="ECO:0007669"/>
    <property type="project" value="UniProtKB-UniRule"/>
</dbReference>
<dbReference type="CDD" id="cd01898">
    <property type="entry name" value="Obg"/>
    <property type="match status" value="1"/>
</dbReference>
<dbReference type="FunFam" id="2.70.210.12:FF:000001">
    <property type="entry name" value="GTPase Obg"/>
    <property type="match status" value="1"/>
</dbReference>
<dbReference type="Gene3D" id="2.70.210.12">
    <property type="entry name" value="GTP1/OBG domain"/>
    <property type="match status" value="1"/>
</dbReference>
<dbReference type="Gene3D" id="3.40.50.300">
    <property type="entry name" value="P-loop containing nucleotide triphosphate hydrolases"/>
    <property type="match status" value="1"/>
</dbReference>
<dbReference type="HAMAP" id="MF_01454">
    <property type="entry name" value="GTPase_Obg"/>
    <property type="match status" value="1"/>
</dbReference>
<dbReference type="InterPro" id="IPR031167">
    <property type="entry name" value="G_OBG"/>
</dbReference>
<dbReference type="InterPro" id="IPR006073">
    <property type="entry name" value="GTP-bd"/>
</dbReference>
<dbReference type="InterPro" id="IPR014100">
    <property type="entry name" value="GTP-bd_Obg/CgtA"/>
</dbReference>
<dbReference type="InterPro" id="IPR006074">
    <property type="entry name" value="GTP1-OBG_CS"/>
</dbReference>
<dbReference type="InterPro" id="IPR006169">
    <property type="entry name" value="GTP1_OBG_dom"/>
</dbReference>
<dbReference type="InterPro" id="IPR036726">
    <property type="entry name" value="GTP1_OBG_dom_sf"/>
</dbReference>
<dbReference type="InterPro" id="IPR045086">
    <property type="entry name" value="OBG_GTPase"/>
</dbReference>
<dbReference type="InterPro" id="IPR027417">
    <property type="entry name" value="P-loop_NTPase"/>
</dbReference>
<dbReference type="NCBIfam" id="TIGR02729">
    <property type="entry name" value="Obg_CgtA"/>
    <property type="match status" value="1"/>
</dbReference>
<dbReference type="NCBIfam" id="NF008955">
    <property type="entry name" value="PRK12297.1"/>
    <property type="match status" value="1"/>
</dbReference>
<dbReference type="NCBIfam" id="NF008956">
    <property type="entry name" value="PRK12299.1"/>
    <property type="match status" value="1"/>
</dbReference>
<dbReference type="PANTHER" id="PTHR11702">
    <property type="entry name" value="DEVELOPMENTALLY REGULATED GTP-BINDING PROTEIN-RELATED"/>
    <property type="match status" value="1"/>
</dbReference>
<dbReference type="PANTHER" id="PTHR11702:SF31">
    <property type="entry name" value="MITOCHONDRIAL RIBOSOME-ASSOCIATED GTPASE 2"/>
    <property type="match status" value="1"/>
</dbReference>
<dbReference type="Pfam" id="PF01018">
    <property type="entry name" value="GTP1_OBG"/>
    <property type="match status" value="1"/>
</dbReference>
<dbReference type="Pfam" id="PF01926">
    <property type="entry name" value="MMR_HSR1"/>
    <property type="match status" value="1"/>
</dbReference>
<dbReference type="PIRSF" id="PIRSF002401">
    <property type="entry name" value="GTP_bd_Obg/CgtA"/>
    <property type="match status" value="1"/>
</dbReference>
<dbReference type="PRINTS" id="PR00326">
    <property type="entry name" value="GTP1OBG"/>
</dbReference>
<dbReference type="SUPFAM" id="SSF82051">
    <property type="entry name" value="Obg GTP-binding protein N-terminal domain"/>
    <property type="match status" value="1"/>
</dbReference>
<dbReference type="SUPFAM" id="SSF52540">
    <property type="entry name" value="P-loop containing nucleoside triphosphate hydrolases"/>
    <property type="match status" value="1"/>
</dbReference>
<dbReference type="PROSITE" id="PS51710">
    <property type="entry name" value="G_OBG"/>
    <property type="match status" value="1"/>
</dbReference>
<dbReference type="PROSITE" id="PS00905">
    <property type="entry name" value="GTP1_OBG"/>
    <property type="match status" value="1"/>
</dbReference>
<dbReference type="PROSITE" id="PS51883">
    <property type="entry name" value="OBG"/>
    <property type="match status" value="1"/>
</dbReference>
<keyword id="KW-0963">Cytoplasm</keyword>
<keyword id="KW-0342">GTP-binding</keyword>
<keyword id="KW-0378">Hydrolase</keyword>
<keyword id="KW-0460">Magnesium</keyword>
<keyword id="KW-0479">Metal-binding</keyword>
<keyword id="KW-0547">Nucleotide-binding</keyword>
<keyword id="KW-1185">Reference proteome</keyword>
<gene>
    <name evidence="1" type="primary">obg</name>
    <name type="ordered locus">BCAN_A1883</name>
</gene>
<protein>
    <recommendedName>
        <fullName evidence="1">GTPase Obg</fullName>
        <ecNumber evidence="1">3.6.5.-</ecNumber>
    </recommendedName>
    <alternativeName>
        <fullName evidence="1">GTP-binding protein Obg</fullName>
    </alternativeName>
</protein>
<reference key="1">
    <citation type="submission" date="2007-10" db="EMBL/GenBank/DDBJ databases">
        <title>Brucella canis ATCC 23365 whole genome shotgun sequencing project.</title>
        <authorList>
            <person name="Setubal J.C."/>
            <person name="Bowns C."/>
            <person name="Boyle S."/>
            <person name="Crasta O.R."/>
            <person name="Czar M.J."/>
            <person name="Dharmanolla C."/>
            <person name="Gillespie J.J."/>
            <person name="Kenyon R.W."/>
            <person name="Lu J."/>
            <person name="Mane S."/>
            <person name="Mohapatra S."/>
            <person name="Nagrani S."/>
            <person name="Purkayastha A."/>
            <person name="Rajasimha H.K."/>
            <person name="Shallom J.M."/>
            <person name="Shallom S."/>
            <person name="Shukla M."/>
            <person name="Snyder E.E."/>
            <person name="Sobral B.W."/>
            <person name="Wattam A.R."/>
            <person name="Will R."/>
            <person name="Williams K."/>
            <person name="Yoo H."/>
            <person name="Bruce D."/>
            <person name="Detter C."/>
            <person name="Munk C."/>
            <person name="Brettin T.S."/>
        </authorList>
    </citation>
    <scope>NUCLEOTIDE SEQUENCE [LARGE SCALE GENOMIC DNA]</scope>
    <source>
        <strain>ATCC 23365 / NCTC 10854 / RM-666</strain>
    </source>
</reference>
<accession>A9M882</accession>
<sequence length="341" mass="36789">MKFLDQAKIYIRSGNGGAGAVSFRREKFLEFGGPDGGDGGRGGDVWVEAVDGLNTLIDYRYQQHFKAKTGMHGMGRNMTGGKGDDVVLRVPVGTQIFEEDNETLICDITEVGQRYRLAKGGNGGFGNLHFTTSTNRAPRRANPGQEGIERTIWLRLKLIADAGLVGLPNAGKSTFLASVTAAKPKIADYPFTTLHPNLGVARIDGREFVIADIPGLIEGASEGVGLGDRFLGHVERTRVLLHLVSAQEEDVAKAYQVIRGELEAYEHGLADKPEIVALSQVDTLDPETRKAKVKALKKACGCEPLLLSAVSHEGLNDTLRQLARIIDLSRAEEAGTAQAEE</sequence>
<organism>
    <name type="scientific">Brucella canis (strain ATCC 23365 / NCTC 10854 / RM-666)</name>
    <dbReference type="NCBI Taxonomy" id="483179"/>
    <lineage>
        <taxon>Bacteria</taxon>
        <taxon>Pseudomonadati</taxon>
        <taxon>Pseudomonadota</taxon>
        <taxon>Alphaproteobacteria</taxon>
        <taxon>Hyphomicrobiales</taxon>
        <taxon>Brucellaceae</taxon>
        <taxon>Brucella/Ochrobactrum group</taxon>
        <taxon>Brucella</taxon>
    </lineage>
</organism>
<name>OBG_BRUC2</name>
<proteinExistence type="inferred from homology"/>
<evidence type="ECO:0000255" key="1">
    <source>
        <dbReference type="HAMAP-Rule" id="MF_01454"/>
    </source>
</evidence>
<evidence type="ECO:0000255" key="2">
    <source>
        <dbReference type="PROSITE-ProRule" id="PRU01231"/>
    </source>
</evidence>